<comment type="subcellular location">
    <subcellularLocation>
        <location evidence="3">Secreted</location>
    </subcellularLocation>
</comment>
<comment type="similarity">
    <text evidence="3">Belongs to the cysteine-rich repeat secretory protein family.</text>
</comment>
<comment type="sequence caution" evidence="3">
    <conflict type="erroneous gene model prediction">
        <sequence resource="EMBL-CDS" id="CAB45830"/>
    </conflict>
</comment>
<comment type="sequence caution" evidence="3">
    <conflict type="erroneous gene model prediction">
        <sequence resource="EMBL-CDS" id="CAB79064"/>
    </conflict>
</comment>
<feature type="signal peptide" evidence="1">
    <location>
        <begin position="1"/>
        <end position="26"/>
    </location>
</feature>
<feature type="chain" id="PRO_0000403939" description="Cysteine-rich repeat secretory protein 43">
    <location>
        <begin position="27"/>
        <end position="256"/>
    </location>
</feature>
<feature type="domain" description="Gnk2-homologous 1" evidence="2">
    <location>
        <begin position="33"/>
        <end position="136"/>
    </location>
</feature>
<feature type="domain" description="Gnk2-homologous 2" evidence="2">
    <location>
        <begin position="142"/>
        <end position="253"/>
    </location>
</feature>
<protein>
    <recommendedName>
        <fullName>Cysteine-rich repeat secretory protein 43</fullName>
    </recommendedName>
</protein>
<accession>P0CJ50</accession>
<accession>F4JVK9</accession>
<accession>Q680R8</accession>
<accession>Q9S7J6</accession>
<accession>Q9SUM6</accession>
<keyword id="KW-1185">Reference proteome</keyword>
<keyword id="KW-0677">Repeat</keyword>
<keyword id="KW-0964">Secreted</keyword>
<keyword id="KW-0732">Signal</keyword>
<evidence type="ECO:0000255" key="1"/>
<evidence type="ECO:0000255" key="2">
    <source>
        <dbReference type="PROSITE-ProRule" id="PRU00806"/>
    </source>
</evidence>
<evidence type="ECO:0000305" key="3"/>
<gene>
    <name type="primary">CRRSP43</name>
    <name type="ordered locus">At4g20640</name>
    <name type="ORF">F9F13.290</name>
</gene>
<sequence length="256" mass="29018">MSSVFGSVHILAMIAIQLLLTHSVSSLNLTNAYLHHKCSNTQGKYKQGSAFEKNLNLVLSTITSIGNFRDGFRYTEEGEDPNNVFVMFQCRGDSYWSKCPPCISTAVSGLRRRCPRNKGAIIWYDQCLLKISSVASFNKIDYENDFYLSNPNNMSDRGLFNKETSALLEKLAYKASDRNNLDGKQLVLYAAGEKRIGTKKVYAMVQCTKDLIFTKCFECLEGILRKFPQCCDGKRGGRVFGTSCNFRYELYPFLRN</sequence>
<proteinExistence type="inferred from homology"/>
<name>CRR43_ARATH</name>
<dbReference type="EMBL" id="AL080253">
    <property type="protein sequence ID" value="CAB45830.1"/>
    <property type="status" value="ALT_SEQ"/>
    <property type="molecule type" value="Genomic_DNA"/>
</dbReference>
<dbReference type="EMBL" id="AL161553">
    <property type="protein sequence ID" value="CAB79064.1"/>
    <property type="status" value="ALT_SEQ"/>
    <property type="molecule type" value="Genomic_DNA"/>
</dbReference>
<dbReference type="EMBL" id="CP002687">
    <property type="protein sequence ID" value="AEE84350.2"/>
    <property type="molecule type" value="Genomic_DNA"/>
</dbReference>
<dbReference type="PIR" id="T10595">
    <property type="entry name" value="T10595"/>
</dbReference>
<dbReference type="RefSeq" id="NP_001320013.1">
    <property type="nucleotide sequence ID" value="NM_001341449.1"/>
</dbReference>
<dbReference type="RefSeq" id="NP_567608.3">
    <property type="nucleotide sequence ID" value="NM_118177.3"/>
</dbReference>
<dbReference type="RefSeq" id="NP_567609.3">
    <property type="nucleotide sequence ID" value="NM_118178.3"/>
</dbReference>
<dbReference type="RefSeq" id="NP_567610.3">
    <property type="nucleotide sequence ID" value="NM_118179.3"/>
</dbReference>
<dbReference type="RefSeq" id="NP_567611.3">
    <property type="nucleotide sequence ID" value="NM_118180.3"/>
</dbReference>
<dbReference type="RefSeq" id="NP_567612.3">
    <property type="nucleotide sequence ID" value="NM_118181.3"/>
</dbReference>
<dbReference type="RefSeq" id="NP_567614.3">
    <property type="nucleotide sequence ID" value="NM_118183.3"/>
</dbReference>
<dbReference type="SMR" id="P0CJ50"/>
<dbReference type="EnsemblPlants" id="AT4G20580.1">
    <property type="protein sequence ID" value="AT4G20580.1"/>
    <property type="gene ID" value="AT4G20580"/>
</dbReference>
<dbReference type="EnsemblPlants" id="AT4G20590.1">
    <property type="protein sequence ID" value="AT4G20590.1"/>
    <property type="gene ID" value="AT4G20590"/>
</dbReference>
<dbReference type="EnsemblPlants" id="AT4G20600.1">
    <property type="protein sequence ID" value="AT4G20600.1"/>
    <property type="gene ID" value="AT4G20600"/>
</dbReference>
<dbReference type="EnsemblPlants" id="AT4G20610.1">
    <property type="protein sequence ID" value="AT4G20610.1"/>
    <property type="gene ID" value="AT4G20610"/>
</dbReference>
<dbReference type="EnsemblPlants" id="AT4G20620.1">
    <property type="protein sequence ID" value="AT4G20620.1"/>
    <property type="gene ID" value="AT4G20620"/>
</dbReference>
<dbReference type="EnsemblPlants" id="AT4G20630.1">
    <property type="protein sequence ID" value="AT4G20630.1"/>
    <property type="gene ID" value="AT4G20630"/>
</dbReference>
<dbReference type="EnsemblPlants" id="AT4G20640.1">
    <property type="protein sequence ID" value="AT4G20640.1"/>
    <property type="gene ID" value="AT4G20640"/>
</dbReference>
<dbReference type="GeneID" id="827812"/>
<dbReference type="Gramene" id="AT4G20580.1">
    <property type="protein sequence ID" value="AT4G20580.1"/>
    <property type="gene ID" value="AT4G20580"/>
</dbReference>
<dbReference type="Gramene" id="AT4G20590.1">
    <property type="protein sequence ID" value="AT4G20590.1"/>
    <property type="gene ID" value="AT4G20590"/>
</dbReference>
<dbReference type="Gramene" id="AT4G20600.1">
    <property type="protein sequence ID" value="AT4G20600.1"/>
    <property type="gene ID" value="AT4G20600"/>
</dbReference>
<dbReference type="Gramene" id="AT4G20610.1">
    <property type="protein sequence ID" value="AT4G20610.1"/>
    <property type="gene ID" value="AT4G20610"/>
</dbReference>
<dbReference type="Gramene" id="AT4G20620.1">
    <property type="protein sequence ID" value="AT4G20620.1"/>
    <property type="gene ID" value="AT4G20620"/>
</dbReference>
<dbReference type="Gramene" id="AT4G20630.1">
    <property type="protein sequence ID" value="AT4G20630.1"/>
    <property type="gene ID" value="AT4G20630"/>
</dbReference>
<dbReference type="Gramene" id="AT4G20640.1">
    <property type="protein sequence ID" value="AT4G20640.1"/>
    <property type="gene ID" value="AT4G20640"/>
</dbReference>
<dbReference type="KEGG" id="ath:AT4G20580"/>
<dbReference type="KEGG" id="ath:AT4G20590"/>
<dbReference type="KEGG" id="ath:AT4G20600"/>
<dbReference type="KEGG" id="ath:AT4G20610"/>
<dbReference type="KEGG" id="ath:AT4G20620"/>
<dbReference type="KEGG" id="ath:AT4G20630"/>
<dbReference type="KEGG" id="ath:AT4G20640"/>
<dbReference type="Araport" id="AT4G20640"/>
<dbReference type="TAIR" id="AT4G20640"/>
<dbReference type="HOGENOM" id="CLU_000288_35_0_1"/>
<dbReference type="InParanoid" id="P0CJ50"/>
<dbReference type="OMA" id="FIQVWNI"/>
<dbReference type="PRO" id="PR:P0CJ50"/>
<dbReference type="Proteomes" id="UP000006548">
    <property type="component" value="Chromosome 4"/>
</dbReference>
<dbReference type="ExpressionAtlas" id="P0CJ50">
    <property type="expression patterns" value="baseline"/>
</dbReference>
<dbReference type="GO" id="GO:0005576">
    <property type="term" value="C:extracellular region"/>
    <property type="evidence" value="ECO:0007669"/>
    <property type="project" value="UniProtKB-SubCell"/>
</dbReference>
<dbReference type="CDD" id="cd23509">
    <property type="entry name" value="Gnk2-like"/>
    <property type="match status" value="2"/>
</dbReference>
<dbReference type="FunFam" id="3.30.430.20:FF:000002">
    <property type="entry name" value="Cysteine-rich receptor-like protein kinase 10"/>
    <property type="match status" value="1"/>
</dbReference>
<dbReference type="Gene3D" id="3.30.430.20">
    <property type="entry name" value="Gnk2 domain, C-X8-C-X2-C motif"/>
    <property type="match status" value="2"/>
</dbReference>
<dbReference type="InterPro" id="IPR050581">
    <property type="entry name" value="CRR_secretory_protein"/>
</dbReference>
<dbReference type="InterPro" id="IPR002902">
    <property type="entry name" value="GNK2"/>
</dbReference>
<dbReference type="InterPro" id="IPR038408">
    <property type="entry name" value="GNK2_sf"/>
</dbReference>
<dbReference type="PANTHER" id="PTHR32411:SF54">
    <property type="entry name" value="CYSTEINE-RICH REPEAT SECRETORY PROTEIN 29-RELATED"/>
    <property type="match status" value="1"/>
</dbReference>
<dbReference type="PANTHER" id="PTHR32411">
    <property type="entry name" value="CYSTEINE-RICH REPEAT SECRETORY PROTEIN 38-RELATED"/>
    <property type="match status" value="1"/>
</dbReference>
<dbReference type="Pfam" id="PF01657">
    <property type="entry name" value="Stress-antifung"/>
    <property type="match status" value="2"/>
</dbReference>
<dbReference type="PROSITE" id="PS51473">
    <property type="entry name" value="GNK2"/>
    <property type="match status" value="2"/>
</dbReference>
<organism>
    <name type="scientific">Arabidopsis thaliana</name>
    <name type="common">Mouse-ear cress</name>
    <dbReference type="NCBI Taxonomy" id="3702"/>
    <lineage>
        <taxon>Eukaryota</taxon>
        <taxon>Viridiplantae</taxon>
        <taxon>Streptophyta</taxon>
        <taxon>Embryophyta</taxon>
        <taxon>Tracheophyta</taxon>
        <taxon>Spermatophyta</taxon>
        <taxon>Magnoliopsida</taxon>
        <taxon>eudicotyledons</taxon>
        <taxon>Gunneridae</taxon>
        <taxon>Pentapetalae</taxon>
        <taxon>rosids</taxon>
        <taxon>malvids</taxon>
        <taxon>Brassicales</taxon>
        <taxon>Brassicaceae</taxon>
        <taxon>Camelineae</taxon>
        <taxon>Arabidopsis</taxon>
    </lineage>
</organism>
<reference key="1">
    <citation type="journal article" date="1999" name="Nature">
        <title>Sequence and analysis of chromosome 4 of the plant Arabidopsis thaliana.</title>
        <authorList>
            <person name="Mayer K.F.X."/>
            <person name="Schueller C."/>
            <person name="Wambutt R."/>
            <person name="Murphy G."/>
            <person name="Volckaert G."/>
            <person name="Pohl T."/>
            <person name="Duesterhoeft A."/>
            <person name="Stiekema W."/>
            <person name="Entian K.-D."/>
            <person name="Terryn N."/>
            <person name="Harris B."/>
            <person name="Ansorge W."/>
            <person name="Brandt P."/>
            <person name="Grivell L.A."/>
            <person name="Rieger M."/>
            <person name="Weichselgartner M."/>
            <person name="de Simone V."/>
            <person name="Obermaier B."/>
            <person name="Mache R."/>
            <person name="Mueller M."/>
            <person name="Kreis M."/>
            <person name="Delseny M."/>
            <person name="Puigdomenech P."/>
            <person name="Watson M."/>
            <person name="Schmidtheini T."/>
            <person name="Reichert B."/>
            <person name="Portetelle D."/>
            <person name="Perez-Alonso M."/>
            <person name="Boutry M."/>
            <person name="Bancroft I."/>
            <person name="Vos P."/>
            <person name="Hoheisel J."/>
            <person name="Zimmermann W."/>
            <person name="Wedler H."/>
            <person name="Ridley P."/>
            <person name="Langham S.-A."/>
            <person name="McCullagh B."/>
            <person name="Bilham L."/>
            <person name="Robben J."/>
            <person name="van der Schueren J."/>
            <person name="Grymonprez B."/>
            <person name="Chuang Y.-J."/>
            <person name="Vandenbussche F."/>
            <person name="Braeken M."/>
            <person name="Weltjens I."/>
            <person name="Voet M."/>
            <person name="Bastiaens I."/>
            <person name="Aert R."/>
            <person name="Defoor E."/>
            <person name="Weitzenegger T."/>
            <person name="Bothe G."/>
            <person name="Ramsperger U."/>
            <person name="Hilbert H."/>
            <person name="Braun M."/>
            <person name="Holzer E."/>
            <person name="Brandt A."/>
            <person name="Peters S."/>
            <person name="van Staveren M."/>
            <person name="Dirkse W."/>
            <person name="Mooijman P."/>
            <person name="Klein Lankhorst R."/>
            <person name="Rose M."/>
            <person name="Hauf J."/>
            <person name="Koetter P."/>
            <person name="Berneiser S."/>
            <person name="Hempel S."/>
            <person name="Feldpausch M."/>
            <person name="Lamberth S."/>
            <person name="Van den Daele H."/>
            <person name="De Keyser A."/>
            <person name="Buysshaert C."/>
            <person name="Gielen J."/>
            <person name="Villarroel R."/>
            <person name="De Clercq R."/>
            <person name="van Montagu M."/>
            <person name="Rogers J."/>
            <person name="Cronin A."/>
            <person name="Quail M.A."/>
            <person name="Bray-Allen S."/>
            <person name="Clark L."/>
            <person name="Doggett J."/>
            <person name="Hall S."/>
            <person name="Kay M."/>
            <person name="Lennard N."/>
            <person name="McLay K."/>
            <person name="Mayes R."/>
            <person name="Pettett A."/>
            <person name="Rajandream M.A."/>
            <person name="Lyne M."/>
            <person name="Benes V."/>
            <person name="Rechmann S."/>
            <person name="Borkova D."/>
            <person name="Bloecker H."/>
            <person name="Scharfe M."/>
            <person name="Grimm M."/>
            <person name="Loehnert T.-H."/>
            <person name="Dose S."/>
            <person name="de Haan M."/>
            <person name="Maarse A.C."/>
            <person name="Schaefer M."/>
            <person name="Mueller-Auer S."/>
            <person name="Gabel C."/>
            <person name="Fuchs M."/>
            <person name="Fartmann B."/>
            <person name="Granderath K."/>
            <person name="Dauner D."/>
            <person name="Herzl A."/>
            <person name="Neumann S."/>
            <person name="Argiriou A."/>
            <person name="Vitale D."/>
            <person name="Liguori R."/>
            <person name="Piravandi E."/>
            <person name="Massenet O."/>
            <person name="Quigley F."/>
            <person name="Clabauld G."/>
            <person name="Muendlein A."/>
            <person name="Felber R."/>
            <person name="Schnabl S."/>
            <person name="Hiller R."/>
            <person name="Schmidt W."/>
            <person name="Lecharny A."/>
            <person name="Aubourg S."/>
            <person name="Chefdor F."/>
            <person name="Cooke R."/>
            <person name="Berger C."/>
            <person name="Monfort A."/>
            <person name="Casacuberta E."/>
            <person name="Gibbons T."/>
            <person name="Weber N."/>
            <person name="Vandenbol M."/>
            <person name="Bargues M."/>
            <person name="Terol J."/>
            <person name="Torres A."/>
            <person name="Perez-Perez A."/>
            <person name="Purnelle B."/>
            <person name="Bent E."/>
            <person name="Johnson S."/>
            <person name="Tacon D."/>
            <person name="Jesse T."/>
            <person name="Heijnen L."/>
            <person name="Schwarz S."/>
            <person name="Scholler P."/>
            <person name="Heber S."/>
            <person name="Francs P."/>
            <person name="Bielke C."/>
            <person name="Frishman D."/>
            <person name="Haase D."/>
            <person name="Lemcke K."/>
            <person name="Mewes H.-W."/>
            <person name="Stocker S."/>
            <person name="Zaccaria P."/>
            <person name="Bevan M."/>
            <person name="Wilson R.K."/>
            <person name="de la Bastide M."/>
            <person name="Habermann K."/>
            <person name="Parnell L."/>
            <person name="Dedhia N."/>
            <person name="Gnoj L."/>
            <person name="Schutz K."/>
            <person name="Huang E."/>
            <person name="Spiegel L."/>
            <person name="Sekhon M."/>
            <person name="Murray J."/>
            <person name="Sheet P."/>
            <person name="Cordes M."/>
            <person name="Abu-Threideh J."/>
            <person name="Stoneking T."/>
            <person name="Kalicki J."/>
            <person name="Graves T."/>
            <person name="Harmon G."/>
            <person name="Edwards J."/>
            <person name="Latreille P."/>
            <person name="Courtney L."/>
            <person name="Cloud J."/>
            <person name="Abbott A."/>
            <person name="Scott K."/>
            <person name="Johnson D."/>
            <person name="Minx P."/>
            <person name="Bentley D."/>
            <person name="Fulton B."/>
            <person name="Miller N."/>
            <person name="Greco T."/>
            <person name="Kemp K."/>
            <person name="Kramer J."/>
            <person name="Fulton L."/>
            <person name="Mardis E."/>
            <person name="Dante M."/>
            <person name="Pepin K."/>
            <person name="Hillier L.W."/>
            <person name="Nelson J."/>
            <person name="Spieth J."/>
            <person name="Ryan E."/>
            <person name="Andrews S."/>
            <person name="Geisel C."/>
            <person name="Layman D."/>
            <person name="Du H."/>
            <person name="Ali J."/>
            <person name="Berghoff A."/>
            <person name="Jones K."/>
            <person name="Drone K."/>
            <person name="Cotton M."/>
            <person name="Joshu C."/>
            <person name="Antonoiu B."/>
            <person name="Zidanic M."/>
            <person name="Strong C."/>
            <person name="Sun H."/>
            <person name="Lamar B."/>
            <person name="Yordan C."/>
            <person name="Ma P."/>
            <person name="Zhong J."/>
            <person name="Preston R."/>
            <person name="Vil D."/>
            <person name="Shekher M."/>
            <person name="Matero A."/>
            <person name="Shah R."/>
            <person name="Swaby I.K."/>
            <person name="O'Shaughnessy A."/>
            <person name="Rodriguez M."/>
            <person name="Hoffman J."/>
            <person name="Till S."/>
            <person name="Granat S."/>
            <person name="Shohdy N."/>
            <person name="Hasegawa A."/>
            <person name="Hameed A."/>
            <person name="Lodhi M."/>
            <person name="Johnson A."/>
            <person name="Chen E."/>
            <person name="Marra M.A."/>
            <person name="Martienssen R."/>
            <person name="McCombie W.R."/>
        </authorList>
    </citation>
    <scope>NUCLEOTIDE SEQUENCE [LARGE SCALE GENOMIC DNA]</scope>
    <source>
        <strain>cv. Columbia</strain>
    </source>
</reference>
<reference key="2">
    <citation type="journal article" date="2017" name="Plant J.">
        <title>Araport11: a complete reannotation of the Arabidopsis thaliana reference genome.</title>
        <authorList>
            <person name="Cheng C.Y."/>
            <person name="Krishnakumar V."/>
            <person name="Chan A.P."/>
            <person name="Thibaud-Nissen F."/>
            <person name="Schobel S."/>
            <person name="Town C.D."/>
        </authorList>
    </citation>
    <scope>GENOME REANNOTATION</scope>
    <source>
        <strain>cv. Columbia</strain>
    </source>
</reference>
<reference key="3">
    <citation type="journal article" date="2001" name="Plant Physiol.">
        <title>A superfamily of proteins with novel cysteine-rich repeats.</title>
        <authorList>
            <person name="Chen Z."/>
        </authorList>
    </citation>
    <scope>GENE FAMILY ORGANIZATION</scope>
    <scope>NOMENCLATURE</scope>
</reference>